<proteinExistence type="inferred from homology"/>
<comment type="subcellular location">
    <subcellularLocation>
        <location evidence="1">Cell inner membrane</location>
        <topology evidence="1">Multi-pass membrane protein</topology>
    </subcellularLocation>
</comment>
<comment type="similarity">
    <text evidence="3">Belongs to the CbrB family.</text>
</comment>
<protein>
    <recommendedName>
        <fullName>Inner membrane protein CbrB</fullName>
    </recommendedName>
</protein>
<organism>
    <name type="scientific">Shigella sonnei (strain Ss046)</name>
    <dbReference type="NCBI Taxonomy" id="300269"/>
    <lineage>
        <taxon>Bacteria</taxon>
        <taxon>Pseudomonadati</taxon>
        <taxon>Pseudomonadota</taxon>
        <taxon>Gammaproteobacteria</taxon>
        <taxon>Enterobacterales</taxon>
        <taxon>Enterobacteriaceae</taxon>
        <taxon>Shigella</taxon>
    </lineage>
</organism>
<reference key="1">
    <citation type="journal article" date="2005" name="Nucleic Acids Res.">
        <title>Genome dynamics and diversity of Shigella species, the etiologic agents of bacillary dysentery.</title>
        <authorList>
            <person name="Yang F."/>
            <person name="Yang J."/>
            <person name="Zhang X."/>
            <person name="Chen L."/>
            <person name="Jiang Y."/>
            <person name="Yan Y."/>
            <person name="Tang X."/>
            <person name="Wang J."/>
            <person name="Xiong Z."/>
            <person name="Dong J."/>
            <person name="Xue Y."/>
            <person name="Zhu Y."/>
            <person name="Xu X."/>
            <person name="Sun L."/>
            <person name="Chen S."/>
            <person name="Nie H."/>
            <person name="Peng J."/>
            <person name="Xu J."/>
            <person name="Wang Y."/>
            <person name="Yuan Z."/>
            <person name="Wen Y."/>
            <person name="Yao Z."/>
            <person name="Shen Y."/>
            <person name="Qiang B."/>
            <person name="Hou Y."/>
            <person name="Yu J."/>
            <person name="Jin Q."/>
        </authorList>
    </citation>
    <scope>NUCLEOTIDE SEQUENCE [LARGE SCALE GENOMIC DNA]</scope>
    <source>
        <strain>Ss046</strain>
    </source>
</reference>
<sequence length="157" mass="16771">MSVSRRVIHHGLYFAVLGPLIGVLFLVLYIFFAKEPLVLLVIIQVLPLFLLLSITTGAIPALLTGVMVACLPEKIGSQKNYRCLAGGIGGVVITEIYCAVIVHIKGMASSELFENILSGDSLVVRIIPALLAGVVMSRIITRLPGLDISCPETDSLS</sequence>
<evidence type="ECO:0000250" key="1"/>
<evidence type="ECO:0000255" key="2"/>
<evidence type="ECO:0000305" key="3"/>
<feature type="chain" id="PRO_0000320706" description="Inner membrane protein CbrB">
    <location>
        <begin position="1"/>
        <end position="157"/>
    </location>
</feature>
<feature type="topological domain" description="Cytoplasmic" evidence="2">
    <location>
        <begin position="1"/>
        <end position="11"/>
    </location>
</feature>
<feature type="transmembrane region" description="Helical" evidence="2">
    <location>
        <begin position="12"/>
        <end position="32"/>
    </location>
</feature>
<feature type="topological domain" description="Periplasmic" evidence="2">
    <location>
        <begin position="33"/>
        <end position="36"/>
    </location>
</feature>
<feature type="transmembrane region" description="Helical" evidence="2">
    <location>
        <begin position="37"/>
        <end position="57"/>
    </location>
</feature>
<feature type="topological domain" description="Cytoplasmic" evidence="2">
    <location>
        <begin position="58"/>
        <end position="83"/>
    </location>
</feature>
<feature type="transmembrane region" description="Helical" evidence="2">
    <location>
        <begin position="84"/>
        <end position="104"/>
    </location>
</feature>
<feature type="topological domain" description="Periplasmic" evidence="2">
    <location>
        <begin position="105"/>
        <end position="115"/>
    </location>
</feature>
<feature type="transmembrane region" description="Helical" evidence="2">
    <location>
        <begin position="116"/>
        <end position="136"/>
    </location>
</feature>
<feature type="topological domain" description="Cytoplasmic" evidence="2">
    <location>
        <begin position="137"/>
        <end position="157"/>
    </location>
</feature>
<gene>
    <name type="primary">cbrB</name>
    <name type="ordered locus">SSON_3560</name>
</gene>
<accession>Q3YWJ8</accession>
<dbReference type="EMBL" id="CP000038">
    <property type="protein sequence ID" value="AAZ90114.1"/>
    <property type="molecule type" value="Genomic_DNA"/>
</dbReference>
<dbReference type="RefSeq" id="WP_000116772.1">
    <property type="nucleotide sequence ID" value="NC_007384.1"/>
</dbReference>
<dbReference type="KEGG" id="ssn:SSON_3560"/>
<dbReference type="HOGENOM" id="CLU_139024_0_0_6"/>
<dbReference type="Proteomes" id="UP000002529">
    <property type="component" value="Chromosome"/>
</dbReference>
<dbReference type="GO" id="GO:0005886">
    <property type="term" value="C:plasma membrane"/>
    <property type="evidence" value="ECO:0007669"/>
    <property type="project" value="UniProtKB-SubCell"/>
</dbReference>
<dbReference type="NCBIfam" id="NF007334">
    <property type="entry name" value="PRK09823.1"/>
    <property type="match status" value="1"/>
</dbReference>
<keyword id="KW-0997">Cell inner membrane</keyword>
<keyword id="KW-1003">Cell membrane</keyword>
<keyword id="KW-0472">Membrane</keyword>
<keyword id="KW-1185">Reference proteome</keyword>
<keyword id="KW-0812">Transmembrane</keyword>
<keyword id="KW-1133">Transmembrane helix</keyword>
<name>CBRB_SHISS</name>